<keyword id="KW-1003">Cell membrane</keyword>
<keyword id="KW-0297">G-protein coupled receptor</keyword>
<keyword id="KW-0325">Glycoprotein</keyword>
<keyword id="KW-0449">Lipoprotein</keyword>
<keyword id="KW-0472">Membrane</keyword>
<keyword id="KW-0564">Palmitate</keyword>
<keyword id="KW-0675">Receptor</keyword>
<keyword id="KW-1185">Reference proteome</keyword>
<keyword id="KW-0807">Transducer</keyword>
<keyword id="KW-0812">Transmembrane</keyword>
<keyword id="KW-1133">Transmembrane helix</keyword>
<reference key="1">
    <citation type="journal article" date="1999" name="Hereditas">
        <title>The melanocyte-stimulating hormone receptor (MC1-R) gene as a tool in evolutionary studies of artiodactyles.</title>
        <authorList>
            <person name="Klungland H."/>
            <person name="Roed K.H."/>
            <person name="Nesbo C.L."/>
            <person name="Jakobsen K.S."/>
            <person name="Vage D.I."/>
        </authorList>
    </citation>
    <scope>NUCLEOTIDE SEQUENCE [GENOMIC DNA]</scope>
</reference>
<feature type="chain" id="PRO_0000069800" description="Melanocyte-stimulating hormone receptor">
    <location>
        <begin position="1"/>
        <end position="317"/>
    </location>
</feature>
<feature type="topological domain" description="Extracellular" evidence="2">
    <location>
        <begin position="1"/>
        <end position="37"/>
    </location>
</feature>
<feature type="transmembrane region" description="Helical; Name=1" evidence="2">
    <location>
        <begin position="38"/>
        <end position="63"/>
    </location>
</feature>
<feature type="topological domain" description="Cytoplasmic" evidence="2">
    <location>
        <begin position="64"/>
        <end position="72"/>
    </location>
</feature>
<feature type="transmembrane region" description="Helical; Name=2" evidence="2">
    <location>
        <begin position="73"/>
        <end position="93"/>
    </location>
</feature>
<feature type="topological domain" description="Extracellular" evidence="2">
    <location>
        <begin position="94"/>
        <end position="118"/>
    </location>
</feature>
<feature type="transmembrane region" description="Helical; Name=3" evidence="2">
    <location>
        <begin position="119"/>
        <end position="140"/>
    </location>
</feature>
<feature type="topological domain" description="Cytoplasmic" evidence="2">
    <location>
        <begin position="141"/>
        <end position="163"/>
    </location>
</feature>
<feature type="transmembrane region" description="Helical; Name=4" evidence="2">
    <location>
        <begin position="164"/>
        <end position="183"/>
    </location>
</feature>
<feature type="topological domain" description="Extracellular" evidence="2">
    <location>
        <begin position="184"/>
        <end position="191"/>
    </location>
</feature>
<feature type="transmembrane region" description="Helical; Name=5" evidence="2">
    <location>
        <begin position="192"/>
        <end position="211"/>
    </location>
</feature>
<feature type="topological domain" description="Cytoplasmic" evidence="2">
    <location>
        <begin position="212"/>
        <end position="240"/>
    </location>
</feature>
<feature type="transmembrane region" description="Helical; Name=6" evidence="2">
    <location>
        <begin position="241"/>
        <end position="266"/>
    </location>
</feature>
<feature type="topological domain" description="Extracellular" evidence="2">
    <location>
        <begin position="267"/>
        <end position="279"/>
    </location>
</feature>
<feature type="transmembrane region" description="Helical; Name=7" evidence="2">
    <location>
        <begin position="280"/>
        <end position="300"/>
    </location>
</feature>
<feature type="topological domain" description="Cytoplasmic" evidence="2">
    <location>
        <begin position="301"/>
        <end position="317"/>
    </location>
</feature>
<feature type="lipid moiety-binding region" description="S-palmitoyl cysteine" evidence="2">
    <location>
        <position position="315"/>
    </location>
</feature>
<feature type="glycosylation site" description="N-linked (GlcNAc...) asparagine" evidence="2">
    <location>
        <position position="29"/>
    </location>
</feature>
<gene>
    <name type="primary">MC1R</name>
    <name type="synonym">MSHR</name>
</gene>
<comment type="function">
    <text evidence="1">Receptor for MSH (alpha, beta and gamma) and ACTH (By similarity). The activity of this receptor is mediated by G proteins which activate adenylate cyclase (By similarity). Mediates melanogenesis, the production of eumelanin (black/brown) and phaeomelanin (red/yellow), via regulation of cAMP signaling in melanocytes (By similarity).</text>
</comment>
<comment type="subunit">
    <text evidence="1">Interacts with MGRN1, but does not undergo MGRN1-mediated ubiquitination; this interaction competes with GNAS-binding and thus inhibits agonist-induced cAMP production. Interacts with OPN3; the interaction results in a decrease in MC1R-mediated cAMP signaling and ultimately a decrease in melanin production in melanocytes.</text>
</comment>
<comment type="subcellular location">
    <subcellularLocation>
        <location evidence="1">Cell membrane</location>
        <topology evidence="2">Multi-pass membrane protein</topology>
    </subcellularLocation>
</comment>
<comment type="similarity">
    <text evidence="3">Belongs to the G-protein coupled receptor 1 family.</text>
</comment>
<organism>
    <name type="scientific">Capra hircus</name>
    <name type="common">Goat</name>
    <dbReference type="NCBI Taxonomy" id="9925"/>
    <lineage>
        <taxon>Eukaryota</taxon>
        <taxon>Metazoa</taxon>
        <taxon>Chordata</taxon>
        <taxon>Craniata</taxon>
        <taxon>Vertebrata</taxon>
        <taxon>Euteleostomi</taxon>
        <taxon>Mammalia</taxon>
        <taxon>Eutheria</taxon>
        <taxon>Laurasiatheria</taxon>
        <taxon>Artiodactyla</taxon>
        <taxon>Ruminantia</taxon>
        <taxon>Pecora</taxon>
        <taxon>Bovidae</taxon>
        <taxon>Caprinae</taxon>
        <taxon>Capra</taxon>
    </lineage>
</organism>
<accession>P56444</accession>
<dbReference type="EMBL" id="Y13958">
    <property type="protein sequence ID" value="CAA74292.1"/>
    <property type="molecule type" value="Genomic_DNA"/>
</dbReference>
<dbReference type="SMR" id="P56444"/>
<dbReference type="STRING" id="9925.ENSCHIP00000006723"/>
<dbReference type="GlyCosmos" id="P56444">
    <property type="glycosylation" value="1 site, No reported glycans"/>
</dbReference>
<dbReference type="Ensembl" id="ENSCHIT00020033624">
    <property type="protein sequence ID" value="ENSCHIP00020025035"/>
    <property type="gene ID" value="ENSCHIG00020016184"/>
</dbReference>
<dbReference type="Proteomes" id="UP000291000">
    <property type="component" value="Unassembled WGS sequence"/>
</dbReference>
<dbReference type="Proteomes" id="UP000694566">
    <property type="component" value="Unplaced"/>
</dbReference>
<dbReference type="GO" id="GO:0005886">
    <property type="term" value="C:plasma membrane"/>
    <property type="evidence" value="ECO:0000250"/>
    <property type="project" value="UniProtKB"/>
</dbReference>
<dbReference type="GO" id="GO:0004980">
    <property type="term" value="F:melanocyte-stimulating hormone receptor activity"/>
    <property type="evidence" value="ECO:0007669"/>
    <property type="project" value="InterPro"/>
</dbReference>
<dbReference type="CDD" id="cd15351">
    <property type="entry name" value="7tmA_MC1R"/>
    <property type="match status" value="1"/>
</dbReference>
<dbReference type="FunFam" id="1.20.1070.10:FF:000211">
    <property type="entry name" value="Melanocyte-stimulating hormone receptor"/>
    <property type="match status" value="1"/>
</dbReference>
<dbReference type="Gene3D" id="1.20.1070.10">
    <property type="entry name" value="Rhodopsin 7-helix transmembrane proteins"/>
    <property type="match status" value="1"/>
</dbReference>
<dbReference type="InterPro" id="IPR000276">
    <property type="entry name" value="GPCR_Rhodpsn"/>
</dbReference>
<dbReference type="InterPro" id="IPR017452">
    <property type="entry name" value="GPCR_Rhodpsn_7TM"/>
</dbReference>
<dbReference type="InterPro" id="IPR001671">
    <property type="entry name" value="Melcrt_ACTH_rcpt"/>
</dbReference>
<dbReference type="InterPro" id="IPR000761">
    <property type="entry name" value="MSH_rcpt"/>
</dbReference>
<dbReference type="PANTHER" id="PTHR22750">
    <property type="entry name" value="G-PROTEIN COUPLED RECEPTOR"/>
    <property type="match status" value="1"/>
</dbReference>
<dbReference type="Pfam" id="PF00001">
    <property type="entry name" value="7tm_1"/>
    <property type="match status" value="1"/>
</dbReference>
<dbReference type="PRINTS" id="PR00237">
    <property type="entry name" value="GPCRRHODOPSN"/>
</dbReference>
<dbReference type="PRINTS" id="PR00534">
    <property type="entry name" value="MCRFAMILY"/>
</dbReference>
<dbReference type="PRINTS" id="PR00536">
    <property type="entry name" value="MELNOCYTESHR"/>
</dbReference>
<dbReference type="SMART" id="SM01381">
    <property type="entry name" value="7TM_GPCR_Srsx"/>
    <property type="match status" value="1"/>
</dbReference>
<dbReference type="SUPFAM" id="SSF81321">
    <property type="entry name" value="Family A G protein-coupled receptor-like"/>
    <property type="match status" value="1"/>
</dbReference>
<dbReference type="PROSITE" id="PS00237">
    <property type="entry name" value="G_PROTEIN_RECEP_F1_1"/>
    <property type="match status" value="1"/>
</dbReference>
<dbReference type="PROSITE" id="PS50262">
    <property type="entry name" value="G_PROTEIN_RECEP_F1_2"/>
    <property type="match status" value="1"/>
</dbReference>
<proteinExistence type="inferred from homology"/>
<name>MSHR_CAPHI</name>
<evidence type="ECO:0000250" key="1">
    <source>
        <dbReference type="UniProtKB" id="Q01726"/>
    </source>
</evidence>
<evidence type="ECO:0000255" key="2"/>
<evidence type="ECO:0000255" key="3">
    <source>
        <dbReference type="PROSITE-ProRule" id="PRU00521"/>
    </source>
</evidence>
<sequence length="317" mass="34860">MPALGSPRRLLGSLNCTPPATLPLTLAPNRTGPQCLEVSIPDGLFLSLGLVSLVENVLVVAAIAKNRNLHSPMYYFICCLAMSDLLVSVSNVLETAVMLLLEAGVLATRAAVVQQLDNVIDVLICSSMVSSLCFLGAIAVDRYISIFYALRYHSVVTLPRAWRIIAAIWVASILTSVLSITYYNHTVVLLCLVGFFIAMLALMAVLYVHMLARACQHARGIARLQKRQRPIHQGFGLKGAATLTILLGVFFLCWGPFFLHLSLIVLCPQHPTCGCIFKNFNLFLALIICNAIVDPLIYAFRSQELRKTLQEVLQCSW</sequence>
<protein>
    <recommendedName>
        <fullName>Melanocyte-stimulating hormone receptor</fullName>
        <shortName>MSH-R</shortName>
    </recommendedName>
    <alternativeName>
        <fullName>Melanocortin receptor 1</fullName>
        <shortName>MC1-R</shortName>
    </alternativeName>
</protein>